<organism>
    <name type="scientific">Stutzerimonas stutzeri (strain A1501)</name>
    <name type="common">Pseudomonas stutzeri</name>
    <dbReference type="NCBI Taxonomy" id="379731"/>
    <lineage>
        <taxon>Bacteria</taxon>
        <taxon>Pseudomonadati</taxon>
        <taxon>Pseudomonadota</taxon>
        <taxon>Gammaproteobacteria</taxon>
        <taxon>Pseudomonadales</taxon>
        <taxon>Pseudomonadaceae</taxon>
        <taxon>Stutzerimonas</taxon>
    </lineage>
</organism>
<feature type="chain" id="PRO_0000303112" description="Malonate decarboxylase acyl carrier protein">
    <location>
        <begin position="1"/>
        <end position="99"/>
    </location>
</feature>
<feature type="modified residue" description="O-(phosphoribosyl dephospho-coenzyme A)serine" evidence="1">
    <location>
        <position position="25"/>
    </location>
</feature>
<gene>
    <name evidence="1" type="primary">mdcC</name>
    <name type="ordered locus">PST_4118</name>
</gene>
<reference key="1">
    <citation type="journal article" date="2008" name="Proc. Natl. Acad. Sci. U.S.A.">
        <title>Nitrogen fixation island and rhizosphere competence traits in the genome of root-associated Pseudomonas stutzeri A1501.</title>
        <authorList>
            <person name="Yan Y."/>
            <person name="Yang J."/>
            <person name="Dou Y."/>
            <person name="Chen M."/>
            <person name="Ping S."/>
            <person name="Peng J."/>
            <person name="Lu W."/>
            <person name="Zhang W."/>
            <person name="Yao Z."/>
            <person name="Li H."/>
            <person name="Liu W."/>
            <person name="He S."/>
            <person name="Geng L."/>
            <person name="Zhang X."/>
            <person name="Yang F."/>
            <person name="Yu H."/>
            <person name="Zhan Y."/>
            <person name="Li D."/>
            <person name="Lin Z."/>
            <person name="Wang Y."/>
            <person name="Elmerich C."/>
            <person name="Lin M."/>
            <person name="Jin Q."/>
        </authorList>
    </citation>
    <scope>NUCLEOTIDE SEQUENCE [LARGE SCALE GENOMIC DNA]</scope>
    <source>
        <strain>A1501</strain>
    </source>
</reference>
<protein>
    <recommendedName>
        <fullName evidence="1">Malonate decarboxylase acyl carrier protein</fullName>
    </recommendedName>
    <alternativeName>
        <fullName evidence="1">Malonate decarboxylase subunit delta</fullName>
    </alternativeName>
</protein>
<keyword id="KW-0963">Cytoplasm</keyword>
<keyword id="KW-0597">Phosphoprotein</keyword>
<keyword id="KW-1185">Reference proteome</keyword>
<comment type="function">
    <text evidence="1">Subunit of malonate decarboxylase, it is an acyl carrier protein to which acetyl and malonyl thioester residues are bound via a 2'-(5''-phosphoribosyl)-3'-dephospho-CoA prosthetic group and turn over during the catalytic mechanism.</text>
</comment>
<comment type="subcellular location">
    <subcellularLocation>
        <location evidence="1">Cytoplasm</location>
    </subcellularLocation>
</comment>
<comment type="PTM">
    <text evidence="1">Covalently binds the prosthetic group of malonate decarboxylase.</text>
</comment>
<comment type="similarity">
    <text evidence="1">Belongs to the MdcC family.</text>
</comment>
<accession>A4VRY9</accession>
<name>MDCC_STUS1</name>
<evidence type="ECO:0000255" key="1">
    <source>
        <dbReference type="HAMAP-Rule" id="MF_00710"/>
    </source>
</evidence>
<proteinExistence type="inferred from homology"/>
<dbReference type="EMBL" id="CP000304">
    <property type="protein sequence ID" value="ABP81740.1"/>
    <property type="molecule type" value="Genomic_DNA"/>
</dbReference>
<dbReference type="RefSeq" id="WP_003296879.1">
    <property type="nucleotide sequence ID" value="NC_009434.1"/>
</dbReference>
<dbReference type="SMR" id="A4VRY9"/>
<dbReference type="KEGG" id="psa:PST_4118"/>
<dbReference type="eggNOG" id="COG3052">
    <property type="taxonomic scope" value="Bacteria"/>
</dbReference>
<dbReference type="HOGENOM" id="CLU_173135_1_0_6"/>
<dbReference type="Proteomes" id="UP000000233">
    <property type="component" value="Chromosome"/>
</dbReference>
<dbReference type="GO" id="GO:0005737">
    <property type="term" value="C:cytoplasm"/>
    <property type="evidence" value="ECO:0007669"/>
    <property type="project" value="UniProtKB-SubCell"/>
</dbReference>
<dbReference type="GO" id="GO:0000036">
    <property type="term" value="F:acyl carrier activity"/>
    <property type="evidence" value="ECO:0007669"/>
    <property type="project" value="UniProtKB-UniRule"/>
</dbReference>
<dbReference type="HAMAP" id="MF_00710">
    <property type="entry name" value="Malonate_deCO2ase_dsu"/>
    <property type="match status" value="1"/>
</dbReference>
<dbReference type="InterPro" id="IPR023439">
    <property type="entry name" value="Mal_deCO2ase/Cit_lyase_ACP"/>
</dbReference>
<dbReference type="InterPro" id="IPR009662">
    <property type="entry name" value="Malonate_deCO2ase_dsu"/>
</dbReference>
<dbReference type="NCBIfam" id="TIGR03130">
    <property type="entry name" value="malonate_delta"/>
    <property type="match status" value="1"/>
</dbReference>
<dbReference type="NCBIfam" id="NF002293">
    <property type="entry name" value="PRK01220.1"/>
    <property type="match status" value="1"/>
</dbReference>
<dbReference type="Pfam" id="PF06857">
    <property type="entry name" value="ACP"/>
    <property type="match status" value="1"/>
</dbReference>
<sequence length="99" mass="10726">METLSFEFAAGQPARGKALVGVVGSGDLEVLLEPGQAGKLAIQVVTSVNGAEQRWQQLFERMFREQTPPALNIDIHDFGATPGVVRLRLEQGLEEVGHD</sequence>